<sequence>MKKQLYQLSNTDIAFPPIECALDSPDGLLAIGGDLSLARLSNAYNNGIFPWFSEDEPIMWWSPSERGIVELDNFHISKSLRKHLKKHPVTVTINNAFIEVIEACCEQRIDTDGTWITSDMLTAYINAHNAGIAHSVEVWREGELAGGLYGIMQNGVFCGESMFHHQTNCSKLAMWALVNWLKRHNAHFIDCQLENPYLMSLGATVIPRPAFLAKLHAAQNYKVDPAMWIPQELNAIYE</sequence>
<keyword id="KW-0012">Acyltransferase</keyword>
<keyword id="KW-0963">Cytoplasm</keyword>
<keyword id="KW-1185">Reference proteome</keyword>
<keyword id="KW-0808">Transferase</keyword>
<protein>
    <recommendedName>
        <fullName evidence="1">Leucyl/phenylalanyl-tRNA--protein transferase</fullName>
        <ecNumber evidence="1">2.3.2.6</ecNumber>
    </recommendedName>
    <alternativeName>
        <fullName evidence="1">L/F-transferase</fullName>
    </alternativeName>
    <alternativeName>
        <fullName evidence="1">Leucyltransferase</fullName>
    </alternativeName>
    <alternativeName>
        <fullName evidence="1">Phenyalanyltransferase</fullName>
    </alternativeName>
</protein>
<accession>Q3IH36</accession>
<feature type="chain" id="PRO_0000258076" description="Leucyl/phenylalanyl-tRNA--protein transferase">
    <location>
        <begin position="1"/>
        <end position="238"/>
    </location>
</feature>
<name>LFTR_PSET1</name>
<dbReference type="EC" id="2.3.2.6" evidence="1"/>
<dbReference type="EMBL" id="CR954246">
    <property type="protein sequence ID" value="CAI86793.1"/>
    <property type="molecule type" value="Genomic_DNA"/>
</dbReference>
<dbReference type="SMR" id="Q3IH36"/>
<dbReference type="STRING" id="326442.PSHAa1721"/>
<dbReference type="KEGG" id="pha:PSHAa1721"/>
<dbReference type="eggNOG" id="COG2360">
    <property type="taxonomic scope" value="Bacteria"/>
</dbReference>
<dbReference type="HOGENOM" id="CLU_075045_0_0_6"/>
<dbReference type="BioCyc" id="PHAL326442:PSHA_RS08440-MONOMER"/>
<dbReference type="Proteomes" id="UP000006843">
    <property type="component" value="Chromosome I"/>
</dbReference>
<dbReference type="GO" id="GO:0005737">
    <property type="term" value="C:cytoplasm"/>
    <property type="evidence" value="ECO:0007669"/>
    <property type="project" value="UniProtKB-SubCell"/>
</dbReference>
<dbReference type="GO" id="GO:0008914">
    <property type="term" value="F:leucyl-tRNA--protein transferase activity"/>
    <property type="evidence" value="ECO:0007669"/>
    <property type="project" value="UniProtKB-UniRule"/>
</dbReference>
<dbReference type="GO" id="GO:0030163">
    <property type="term" value="P:protein catabolic process"/>
    <property type="evidence" value="ECO:0007669"/>
    <property type="project" value="UniProtKB-UniRule"/>
</dbReference>
<dbReference type="FunFam" id="3.30.70.3550:FF:000001">
    <property type="entry name" value="Leucyl/phenylalanyl-tRNA--protein transferase"/>
    <property type="match status" value="1"/>
</dbReference>
<dbReference type="Gene3D" id="3.40.630.70">
    <property type="entry name" value="Leucyl/phenylalanyl-tRNA-protein transferase, C-terminal domain"/>
    <property type="match status" value="1"/>
</dbReference>
<dbReference type="Gene3D" id="3.30.70.3550">
    <property type="entry name" value="Leucyl/phenylalanyl-tRNA-protein transferase, N-terminal domain"/>
    <property type="match status" value="1"/>
</dbReference>
<dbReference type="HAMAP" id="MF_00688">
    <property type="entry name" value="Leu_Phe_trans"/>
    <property type="match status" value="1"/>
</dbReference>
<dbReference type="InterPro" id="IPR016181">
    <property type="entry name" value="Acyl_CoA_acyltransferase"/>
</dbReference>
<dbReference type="InterPro" id="IPR004616">
    <property type="entry name" value="Leu/Phe-tRNA_Trfase"/>
</dbReference>
<dbReference type="InterPro" id="IPR042203">
    <property type="entry name" value="Leu/Phe-tRNA_Trfase_C"/>
</dbReference>
<dbReference type="InterPro" id="IPR042221">
    <property type="entry name" value="Leu/Phe-tRNA_Trfase_N"/>
</dbReference>
<dbReference type="NCBIfam" id="TIGR00667">
    <property type="entry name" value="aat"/>
    <property type="match status" value="1"/>
</dbReference>
<dbReference type="PANTHER" id="PTHR30098">
    <property type="entry name" value="LEUCYL/PHENYLALANYL-TRNA--PROTEIN TRANSFERASE"/>
    <property type="match status" value="1"/>
</dbReference>
<dbReference type="PANTHER" id="PTHR30098:SF2">
    <property type="entry name" value="LEUCYL_PHENYLALANYL-TRNA--PROTEIN TRANSFERASE"/>
    <property type="match status" value="1"/>
</dbReference>
<dbReference type="Pfam" id="PF03588">
    <property type="entry name" value="Leu_Phe_trans"/>
    <property type="match status" value="1"/>
</dbReference>
<dbReference type="SUPFAM" id="SSF55729">
    <property type="entry name" value="Acyl-CoA N-acyltransferases (Nat)"/>
    <property type="match status" value="1"/>
</dbReference>
<comment type="function">
    <text evidence="1">Functions in the N-end rule pathway of protein degradation where it conjugates Leu, Phe and, less efficiently, Met from aminoacyl-tRNAs to the N-termini of proteins containing an N-terminal arginine or lysine.</text>
</comment>
<comment type="catalytic activity">
    <reaction evidence="1">
        <text>N-terminal L-lysyl-[protein] + L-leucyl-tRNA(Leu) = N-terminal L-leucyl-L-lysyl-[protein] + tRNA(Leu) + H(+)</text>
        <dbReference type="Rhea" id="RHEA:12340"/>
        <dbReference type="Rhea" id="RHEA-COMP:9613"/>
        <dbReference type="Rhea" id="RHEA-COMP:9622"/>
        <dbReference type="Rhea" id="RHEA-COMP:12670"/>
        <dbReference type="Rhea" id="RHEA-COMP:12671"/>
        <dbReference type="ChEBI" id="CHEBI:15378"/>
        <dbReference type="ChEBI" id="CHEBI:65249"/>
        <dbReference type="ChEBI" id="CHEBI:78442"/>
        <dbReference type="ChEBI" id="CHEBI:78494"/>
        <dbReference type="ChEBI" id="CHEBI:133043"/>
        <dbReference type="EC" id="2.3.2.6"/>
    </reaction>
</comment>
<comment type="catalytic activity">
    <reaction evidence="1">
        <text>N-terminal L-arginyl-[protein] + L-leucyl-tRNA(Leu) = N-terminal L-leucyl-L-arginyl-[protein] + tRNA(Leu) + H(+)</text>
        <dbReference type="Rhea" id="RHEA:50416"/>
        <dbReference type="Rhea" id="RHEA-COMP:9613"/>
        <dbReference type="Rhea" id="RHEA-COMP:9622"/>
        <dbReference type="Rhea" id="RHEA-COMP:12672"/>
        <dbReference type="Rhea" id="RHEA-COMP:12673"/>
        <dbReference type="ChEBI" id="CHEBI:15378"/>
        <dbReference type="ChEBI" id="CHEBI:64719"/>
        <dbReference type="ChEBI" id="CHEBI:78442"/>
        <dbReference type="ChEBI" id="CHEBI:78494"/>
        <dbReference type="ChEBI" id="CHEBI:133044"/>
        <dbReference type="EC" id="2.3.2.6"/>
    </reaction>
</comment>
<comment type="catalytic activity">
    <reaction evidence="1">
        <text>L-phenylalanyl-tRNA(Phe) + an N-terminal L-alpha-aminoacyl-[protein] = an N-terminal L-phenylalanyl-L-alpha-aminoacyl-[protein] + tRNA(Phe)</text>
        <dbReference type="Rhea" id="RHEA:43632"/>
        <dbReference type="Rhea" id="RHEA-COMP:9668"/>
        <dbReference type="Rhea" id="RHEA-COMP:9699"/>
        <dbReference type="Rhea" id="RHEA-COMP:10636"/>
        <dbReference type="Rhea" id="RHEA-COMP:10637"/>
        <dbReference type="ChEBI" id="CHEBI:78442"/>
        <dbReference type="ChEBI" id="CHEBI:78531"/>
        <dbReference type="ChEBI" id="CHEBI:78597"/>
        <dbReference type="ChEBI" id="CHEBI:83561"/>
        <dbReference type="EC" id="2.3.2.6"/>
    </reaction>
</comment>
<comment type="subcellular location">
    <subcellularLocation>
        <location evidence="1">Cytoplasm</location>
    </subcellularLocation>
</comment>
<comment type="similarity">
    <text evidence="1">Belongs to the L/F-transferase family.</text>
</comment>
<proteinExistence type="inferred from homology"/>
<gene>
    <name evidence="1" type="primary">aat</name>
    <name type="ordered locus">PSHAa1721</name>
</gene>
<evidence type="ECO:0000255" key="1">
    <source>
        <dbReference type="HAMAP-Rule" id="MF_00688"/>
    </source>
</evidence>
<organism>
    <name type="scientific">Pseudoalteromonas translucida (strain TAC 125)</name>
    <dbReference type="NCBI Taxonomy" id="326442"/>
    <lineage>
        <taxon>Bacteria</taxon>
        <taxon>Pseudomonadati</taxon>
        <taxon>Pseudomonadota</taxon>
        <taxon>Gammaproteobacteria</taxon>
        <taxon>Alteromonadales</taxon>
        <taxon>Pseudoalteromonadaceae</taxon>
        <taxon>Pseudoalteromonas</taxon>
    </lineage>
</organism>
<reference key="1">
    <citation type="journal article" date="2005" name="Genome Res.">
        <title>Coping with cold: the genome of the versatile marine Antarctica bacterium Pseudoalteromonas haloplanktis TAC125.</title>
        <authorList>
            <person name="Medigue C."/>
            <person name="Krin E."/>
            <person name="Pascal G."/>
            <person name="Barbe V."/>
            <person name="Bernsel A."/>
            <person name="Bertin P.N."/>
            <person name="Cheung F."/>
            <person name="Cruveiller S."/>
            <person name="D'Amico S."/>
            <person name="Duilio A."/>
            <person name="Fang G."/>
            <person name="Feller G."/>
            <person name="Ho C."/>
            <person name="Mangenot S."/>
            <person name="Marino G."/>
            <person name="Nilsson J."/>
            <person name="Parrilli E."/>
            <person name="Rocha E.P.C."/>
            <person name="Rouy Z."/>
            <person name="Sekowska A."/>
            <person name="Tutino M.L."/>
            <person name="Vallenet D."/>
            <person name="von Heijne G."/>
            <person name="Danchin A."/>
        </authorList>
    </citation>
    <scope>NUCLEOTIDE SEQUENCE [LARGE SCALE GENOMIC DNA]</scope>
    <source>
        <strain>TAC 125</strain>
    </source>
</reference>